<sequence length="507" mass="60514">MEELQRYFEIDRFRQQCFIYPFLFQEYIYALAHYYALNGSIFYETMENFGYDNKSSSLIVKRLITRMHRQNRLIISINDSNQNRFIGHGKNLYTQTVSEGFAVIMEIPFSLQLVFSFEEKEITKSHNLRSIHSIFPFFEDKLSHLNHVSHILIPYPAHLEILVQILRSCIQDAPSLHLLRFFLHDYQNSNSLKARKKSIFVCSKENRRFFLFLYNIHVYECESVFVFLRKQSFHLRSTSFRTVLERTHFYGKIEHLVVVLRNDFQKTLWMFKDPFMHYVRYQGNSLLASKGTHLRMKKWKSYLVHFWQSHFYLWSQPNRIHINQLYNHSFYFMSYLLSVRQNSSAVRSQMLENSFLIDTSIKKFETLVPTIPLIGLLAKAKFCNVFGHPISKPARADSSDSDIISRFGRIYRNLSHYYSGSSKKQTLYRIKYILRLSCARTLARKHKSTARAFLKELGSPFLEEFLMEEEQVLSLIFPRTPSPSYRSHRERIWFLDIICINILTNHV</sequence>
<dbReference type="EMBL" id="AF543722">
    <property type="protein sequence ID" value="AAQ11840.1"/>
    <property type="molecule type" value="Genomic_DNA"/>
</dbReference>
<dbReference type="GO" id="GO:0009507">
    <property type="term" value="C:chloroplast"/>
    <property type="evidence" value="ECO:0007669"/>
    <property type="project" value="UniProtKB-SubCell"/>
</dbReference>
<dbReference type="GO" id="GO:0003723">
    <property type="term" value="F:RNA binding"/>
    <property type="evidence" value="ECO:0007669"/>
    <property type="project" value="UniProtKB-KW"/>
</dbReference>
<dbReference type="GO" id="GO:0006397">
    <property type="term" value="P:mRNA processing"/>
    <property type="evidence" value="ECO:0007669"/>
    <property type="project" value="UniProtKB-KW"/>
</dbReference>
<dbReference type="GO" id="GO:0008380">
    <property type="term" value="P:RNA splicing"/>
    <property type="evidence" value="ECO:0007669"/>
    <property type="project" value="UniProtKB-UniRule"/>
</dbReference>
<dbReference type="GO" id="GO:0008033">
    <property type="term" value="P:tRNA processing"/>
    <property type="evidence" value="ECO:0007669"/>
    <property type="project" value="UniProtKB-KW"/>
</dbReference>
<dbReference type="HAMAP" id="MF_01390">
    <property type="entry name" value="MatK"/>
    <property type="match status" value="1"/>
</dbReference>
<dbReference type="InterPro" id="IPR024937">
    <property type="entry name" value="Domain_X"/>
</dbReference>
<dbReference type="InterPro" id="IPR002866">
    <property type="entry name" value="Maturase_MatK"/>
</dbReference>
<dbReference type="InterPro" id="IPR024942">
    <property type="entry name" value="Maturase_MatK_N"/>
</dbReference>
<dbReference type="PANTHER" id="PTHR34811">
    <property type="entry name" value="MATURASE K"/>
    <property type="match status" value="1"/>
</dbReference>
<dbReference type="PANTHER" id="PTHR34811:SF1">
    <property type="entry name" value="MATURASE K"/>
    <property type="match status" value="1"/>
</dbReference>
<dbReference type="Pfam" id="PF01348">
    <property type="entry name" value="Intron_maturas2"/>
    <property type="match status" value="1"/>
</dbReference>
<dbReference type="Pfam" id="PF01824">
    <property type="entry name" value="MatK_N"/>
    <property type="match status" value="1"/>
</dbReference>
<name>MATK_ANNMU</name>
<protein>
    <recommendedName>
        <fullName evidence="1">Maturase K</fullName>
    </recommendedName>
    <alternativeName>
        <fullName evidence="1">Intron maturase</fullName>
    </alternativeName>
</protein>
<comment type="function">
    <text evidence="1">Usually encoded in the trnK tRNA gene intron. Probably assists in splicing its own and other chloroplast group II introns.</text>
</comment>
<comment type="subcellular location">
    <subcellularLocation>
        <location>Plastid</location>
        <location>Chloroplast</location>
    </subcellularLocation>
</comment>
<comment type="similarity">
    <text evidence="1">Belongs to the intron maturase 2 family. MatK subfamily.</text>
</comment>
<proteinExistence type="inferred from homology"/>
<accession>Q717Z2</accession>
<reference key="1">
    <citation type="submission" date="2002-09" db="EMBL/GenBank/DDBJ databases">
        <title>Rapidly evolving DNA and deep level phylogenetics: a case study in basal angiosperms.</title>
        <authorList>
            <person name="Hilu K.W."/>
            <person name="Mueller K.F."/>
            <person name="Borsch T."/>
        </authorList>
    </citation>
    <scope>NUCLEOTIDE SEQUENCE [GENOMIC DNA]</scope>
</reference>
<organism>
    <name type="scientific">Annona muricata</name>
    <name type="common">Soursop</name>
    <dbReference type="NCBI Taxonomy" id="13337"/>
    <lineage>
        <taxon>Eukaryota</taxon>
        <taxon>Viridiplantae</taxon>
        <taxon>Streptophyta</taxon>
        <taxon>Embryophyta</taxon>
        <taxon>Tracheophyta</taxon>
        <taxon>Spermatophyta</taxon>
        <taxon>Magnoliopsida</taxon>
        <taxon>Magnoliidae</taxon>
        <taxon>Magnoliales</taxon>
        <taxon>Annonaceae</taxon>
        <taxon>Annonoideae</taxon>
        <taxon>Annoneae</taxon>
        <taxon>Annona</taxon>
    </lineage>
</organism>
<evidence type="ECO:0000255" key="1">
    <source>
        <dbReference type="HAMAP-Rule" id="MF_01390"/>
    </source>
</evidence>
<feature type="chain" id="PRO_0000143236" description="Maturase K">
    <location>
        <begin position="1"/>
        <end position="507"/>
    </location>
</feature>
<keyword id="KW-0150">Chloroplast</keyword>
<keyword id="KW-0507">mRNA processing</keyword>
<keyword id="KW-0934">Plastid</keyword>
<keyword id="KW-0694">RNA-binding</keyword>
<keyword id="KW-0819">tRNA processing</keyword>
<gene>
    <name evidence="1" type="primary">matK</name>
</gene>
<geneLocation type="chloroplast"/>